<keyword id="KW-0025">Alternative splicing</keyword>
<keyword id="KW-0547">Nucleotide-binding</keyword>
<keyword id="KW-0539">Nucleus</keyword>
<keyword id="KW-1185">Reference proteome</keyword>
<keyword id="KW-0833">Ubl conjugation pathway</keyword>
<name>AXL1_ARATH</name>
<reference key="1">
    <citation type="journal article" date="1999" name="Nature">
        <title>Sequence and analysis of chromosome 2 of the plant Arabidopsis thaliana.</title>
        <authorList>
            <person name="Lin X."/>
            <person name="Kaul S."/>
            <person name="Rounsley S.D."/>
            <person name="Shea T.P."/>
            <person name="Benito M.-I."/>
            <person name="Town C.D."/>
            <person name="Fujii C.Y."/>
            <person name="Mason T.M."/>
            <person name="Bowman C.L."/>
            <person name="Barnstead M.E."/>
            <person name="Feldblyum T.V."/>
            <person name="Buell C.R."/>
            <person name="Ketchum K.A."/>
            <person name="Lee J.J."/>
            <person name="Ronning C.M."/>
            <person name="Koo H.L."/>
            <person name="Moffat K.S."/>
            <person name="Cronin L.A."/>
            <person name="Shen M."/>
            <person name="Pai G."/>
            <person name="Van Aken S."/>
            <person name="Umayam L."/>
            <person name="Tallon L.J."/>
            <person name="Gill J.E."/>
            <person name="Adams M.D."/>
            <person name="Carrera A.J."/>
            <person name="Creasy T.H."/>
            <person name="Goodman H.M."/>
            <person name="Somerville C.R."/>
            <person name="Copenhaver G.P."/>
            <person name="Preuss D."/>
            <person name="Nierman W.C."/>
            <person name="White O."/>
            <person name="Eisen J.A."/>
            <person name="Salzberg S.L."/>
            <person name="Fraser C.M."/>
            <person name="Venter J.C."/>
        </authorList>
    </citation>
    <scope>NUCLEOTIDE SEQUENCE [LARGE SCALE GENOMIC DNA]</scope>
    <source>
        <strain>cv. Columbia</strain>
    </source>
</reference>
<reference key="2">
    <citation type="journal article" date="2017" name="Plant J.">
        <title>Araport11: a complete reannotation of the Arabidopsis thaliana reference genome.</title>
        <authorList>
            <person name="Cheng C.Y."/>
            <person name="Krishnakumar V."/>
            <person name="Chan A.P."/>
            <person name="Thibaud-Nissen F."/>
            <person name="Schobel S."/>
            <person name="Town C.D."/>
        </authorList>
    </citation>
    <scope>GENOME REANNOTATION</scope>
    <source>
        <strain>cv. Columbia</strain>
    </source>
</reference>
<reference key="3">
    <citation type="journal article" date="2004" name="Genome Res.">
        <title>Whole genome sequence comparisons and 'full-length' cDNA sequences: a combined approach to evaluate and improve Arabidopsis genome annotation.</title>
        <authorList>
            <person name="Castelli V."/>
            <person name="Aury J.-M."/>
            <person name="Jaillon O."/>
            <person name="Wincker P."/>
            <person name="Clepet C."/>
            <person name="Menard M."/>
            <person name="Cruaud C."/>
            <person name="Quetier F."/>
            <person name="Scarpelli C."/>
            <person name="Schaechter V."/>
            <person name="Temple G."/>
            <person name="Caboche M."/>
            <person name="Weissenbach J."/>
            <person name="Salanoubat M."/>
        </authorList>
    </citation>
    <scope>NUCLEOTIDE SEQUENCE [LARGE SCALE MRNA]</scope>
    <source>
        <strain>cv. Columbia</strain>
    </source>
</reference>
<reference key="4">
    <citation type="journal article" date="2007" name="Plant J.">
        <title>AXL and AXR1 have redundant functions in RUB conjugation and growth and development in Arabidopsis.</title>
        <authorList>
            <person name="Dharmasiri N."/>
            <person name="Dharmasiri S."/>
            <person name="Weijers D."/>
            <person name="Karunarathna N."/>
            <person name="Jurgens G."/>
            <person name="Estelle M."/>
        </authorList>
    </citation>
    <scope>FUNCTION</scope>
</reference>
<reference key="5">
    <citation type="journal article" date="2011" name="Plant Mol. Biol.">
        <title>AXR1-ECR1 and AXL1-ECR1 heterodimeric RUB-activating enzymes diverge in function in Arabidopsis thaliana.</title>
        <authorList>
            <person name="Hotton S.K."/>
            <person name="Eigenheer R.A."/>
            <person name="Castro M.F."/>
            <person name="Bostick M."/>
            <person name="Callis J."/>
        </authorList>
    </citation>
    <scope>FUNCTION</scope>
    <scope>INTERACTION WITH ECR1 AND RUB1</scope>
</reference>
<organism>
    <name type="scientific">Arabidopsis thaliana</name>
    <name type="common">Mouse-ear cress</name>
    <dbReference type="NCBI Taxonomy" id="3702"/>
    <lineage>
        <taxon>Eukaryota</taxon>
        <taxon>Viridiplantae</taxon>
        <taxon>Streptophyta</taxon>
        <taxon>Embryophyta</taxon>
        <taxon>Tracheophyta</taxon>
        <taxon>Spermatophyta</taxon>
        <taxon>Magnoliopsida</taxon>
        <taxon>eudicotyledons</taxon>
        <taxon>Gunneridae</taxon>
        <taxon>Pentapetalae</taxon>
        <taxon>rosids</taxon>
        <taxon>malvids</taxon>
        <taxon>Brassicales</taxon>
        <taxon>Brassicaceae</taxon>
        <taxon>Camelineae</taxon>
        <taxon>Arabidopsis</taxon>
    </lineage>
</organism>
<feature type="chain" id="PRO_0000436523" description="NEDD8-activating enzyme E1 regulatory subunit AXL">
    <location>
        <begin position="1"/>
        <end position="523"/>
    </location>
</feature>
<comment type="function">
    <text evidence="2 3 6">Regulatory subunit of the dimeric ECR1-AXL1 E1 enzyme. E1 activates RUB1/NEDD8 by first adenylating its C-terminal glycine residue with ATP, thereafter linking this residue to the side chain of the catalytic cysteine, yielding a RUB1-ECR1 thioester and free AMP. E1 finally transfers RUB1 to the catalytic cysteine of RCE1 (Probable). May function redundantly with AXR1 in the RUB conjugating pathway (PubMed:17655650). Seems not to be functionally equivalent to AXR1 in vivo (PubMed:21311953).</text>
</comment>
<comment type="pathway">
    <text evidence="5">Protein modification; protein neddylation.</text>
</comment>
<comment type="subunit">
    <text evidence="3">Heterodimer of ECR1 and AXL1. The complex binds to RUB1/NEDD8 and RCE1.</text>
</comment>
<comment type="subcellular location">
    <subcellularLocation>
        <location evidence="1">Nucleus</location>
    </subcellularLocation>
</comment>
<comment type="alternative products">
    <event type="alternative splicing"/>
    <isoform>
        <id>Q9ZV69-1</id>
        <name>1</name>
        <sequence type="displayed"/>
    </isoform>
    <text evidence="5">A number of isoforms are produced. According to EST sequences.</text>
</comment>
<comment type="similarity">
    <text evidence="5">Belongs to the ubiquitin-activating E1 family. ULA1 subfamily.</text>
</comment>
<dbReference type="EMBL" id="AC005700">
    <property type="protein sequence ID" value="AAC69937.1"/>
    <property type="molecule type" value="Genomic_DNA"/>
</dbReference>
<dbReference type="EMBL" id="CP002685">
    <property type="protein sequence ID" value="AEC08680.1"/>
    <property type="molecule type" value="Genomic_DNA"/>
</dbReference>
<dbReference type="EMBL" id="BX819419">
    <property type="status" value="NOT_ANNOTATED_CDS"/>
    <property type="molecule type" value="mRNA"/>
</dbReference>
<dbReference type="PIR" id="G84732">
    <property type="entry name" value="G84732"/>
</dbReference>
<dbReference type="RefSeq" id="NP_180800.1">
    <molecule id="Q9ZV69-1"/>
    <property type="nucleotide sequence ID" value="NM_128800.4"/>
</dbReference>
<dbReference type="SMR" id="Q9ZV69"/>
<dbReference type="FunCoup" id="Q9ZV69">
    <property type="interactions" value="4389"/>
</dbReference>
<dbReference type="STRING" id="3702.Q9ZV69"/>
<dbReference type="GlyGen" id="Q9ZV69">
    <property type="glycosylation" value="1 site"/>
</dbReference>
<dbReference type="PaxDb" id="3702-AT2G32410.1"/>
<dbReference type="ProteomicsDB" id="241162">
    <molecule id="Q9ZV69-1"/>
</dbReference>
<dbReference type="EnsemblPlants" id="AT2G32410.1">
    <molecule id="Q9ZV69-1"/>
    <property type="protein sequence ID" value="AT2G32410.1"/>
    <property type="gene ID" value="AT2G32410"/>
</dbReference>
<dbReference type="GeneID" id="817802"/>
<dbReference type="Gramene" id="AT2G32410.1">
    <molecule id="Q9ZV69-1"/>
    <property type="protein sequence ID" value="AT2G32410.1"/>
    <property type="gene ID" value="AT2G32410"/>
</dbReference>
<dbReference type="KEGG" id="ath:AT2G32410"/>
<dbReference type="Araport" id="AT2G32410"/>
<dbReference type="TAIR" id="AT2G32410">
    <property type="gene designation" value="AXL"/>
</dbReference>
<dbReference type="eggNOG" id="KOG2016">
    <property type="taxonomic scope" value="Eukaryota"/>
</dbReference>
<dbReference type="HOGENOM" id="CLU_019618_2_1_1"/>
<dbReference type="InParanoid" id="Q9ZV69"/>
<dbReference type="OMA" id="SAHTQRY"/>
<dbReference type="OrthoDB" id="1708823at2759"/>
<dbReference type="PhylomeDB" id="Q9ZV69"/>
<dbReference type="UniPathway" id="UPA00885"/>
<dbReference type="PRO" id="PR:Q9ZV69"/>
<dbReference type="Proteomes" id="UP000006548">
    <property type="component" value="Chromosome 2"/>
</dbReference>
<dbReference type="ExpressionAtlas" id="Q9ZV69">
    <property type="expression patterns" value="baseline and differential"/>
</dbReference>
<dbReference type="GO" id="GO:0005634">
    <property type="term" value="C:nucleus"/>
    <property type="evidence" value="ECO:0007669"/>
    <property type="project" value="UniProtKB-SubCell"/>
</dbReference>
<dbReference type="GO" id="GO:0005777">
    <property type="term" value="C:peroxisome"/>
    <property type="evidence" value="ECO:0000314"/>
    <property type="project" value="TAIR"/>
</dbReference>
<dbReference type="GO" id="GO:0019781">
    <property type="term" value="F:NEDD8 activating enzyme activity"/>
    <property type="evidence" value="ECO:0007669"/>
    <property type="project" value="InterPro"/>
</dbReference>
<dbReference type="GO" id="GO:0000166">
    <property type="term" value="F:nucleotide binding"/>
    <property type="evidence" value="ECO:0007669"/>
    <property type="project" value="UniProtKB-KW"/>
</dbReference>
<dbReference type="GO" id="GO:0009791">
    <property type="term" value="P:post-embryonic development"/>
    <property type="evidence" value="ECO:0000315"/>
    <property type="project" value="TAIR"/>
</dbReference>
<dbReference type="GO" id="GO:0045116">
    <property type="term" value="P:protein neddylation"/>
    <property type="evidence" value="ECO:0007669"/>
    <property type="project" value="UniProtKB-UniPathway"/>
</dbReference>
<dbReference type="CDD" id="cd01493">
    <property type="entry name" value="APPBP1_RUB"/>
    <property type="match status" value="1"/>
</dbReference>
<dbReference type="FunFam" id="3.40.50.720:FF:000263">
    <property type="entry name" value="NEDD8-activating enzyme E1 regulatory subunit"/>
    <property type="match status" value="1"/>
</dbReference>
<dbReference type="FunFam" id="3.40.50.720:FF:000337">
    <property type="entry name" value="NEDD8-activating enzyme E1 regulatory subunit"/>
    <property type="match status" value="1"/>
</dbReference>
<dbReference type="Gene3D" id="3.40.50.720">
    <property type="entry name" value="NAD(P)-binding Rossmann-like Domain"/>
    <property type="match status" value="2"/>
</dbReference>
<dbReference type="InterPro" id="IPR030667">
    <property type="entry name" value="APP-BP1"/>
</dbReference>
<dbReference type="InterPro" id="IPR045886">
    <property type="entry name" value="ThiF/MoeB/HesA"/>
</dbReference>
<dbReference type="InterPro" id="IPR000594">
    <property type="entry name" value="ThiF_NAD_FAD-bd"/>
</dbReference>
<dbReference type="InterPro" id="IPR035985">
    <property type="entry name" value="Ubiquitin-activating_enz"/>
</dbReference>
<dbReference type="PANTHER" id="PTHR10953:SF232">
    <property type="entry name" value="NEDD8-ACTIVATING ENZYME E1 REGULATORY SUBUNIT AXL"/>
    <property type="match status" value="1"/>
</dbReference>
<dbReference type="PANTHER" id="PTHR10953">
    <property type="entry name" value="UBIQUITIN-ACTIVATING ENZYME E1"/>
    <property type="match status" value="1"/>
</dbReference>
<dbReference type="Pfam" id="PF00899">
    <property type="entry name" value="ThiF"/>
    <property type="match status" value="1"/>
</dbReference>
<dbReference type="PIRSF" id="PIRSF039099">
    <property type="entry name" value="APP-BP1"/>
    <property type="match status" value="1"/>
</dbReference>
<dbReference type="SUPFAM" id="SSF69572">
    <property type="entry name" value="Activating enzymes of the ubiquitin-like proteins"/>
    <property type="match status" value="1"/>
</dbReference>
<evidence type="ECO:0000250" key="1">
    <source>
        <dbReference type="UniProtKB" id="P42744"/>
    </source>
</evidence>
<evidence type="ECO:0000269" key="2">
    <source>
    </source>
</evidence>
<evidence type="ECO:0000269" key="3">
    <source>
    </source>
</evidence>
<evidence type="ECO:0000303" key="4">
    <source>
    </source>
</evidence>
<evidence type="ECO:0000305" key="5"/>
<evidence type="ECO:0000305" key="6">
    <source>
    </source>
</evidence>
<evidence type="ECO:0000312" key="7">
    <source>
        <dbReference type="Araport" id="AT2G32410"/>
    </source>
</evidence>
<protein>
    <recommendedName>
        <fullName evidence="5">NEDD8-activating enzyme E1 regulatory subunit AXL</fullName>
    </recommendedName>
    <alternativeName>
        <fullName evidence="4">Protein AXR1-LIKE</fullName>
    </alternativeName>
    <alternativeName>
        <fullName evidence="4">Protein AXR1-LIKE 1</fullName>
    </alternativeName>
</protein>
<accession>Q9ZV69</accession>
<sequence>MAEPKTKYDRQLRIWGELGQSALETASICLLNCGPTGSEALKNLVIGGIGSITIVDGSKVEIGDLGNNFMVDAKSVGQSRAKTVCGFLQELNDSVKANFVEENPDTLISTDPSFFSQFTLVIATQLVEDSMVKLDRICREANVMLVLARSYGLTGFVRISVKEHTAIETKPDHSLDDLRLNSPWPELKSYVESIDLNVEEPAAHKHIPYVVILVKVAEEWAQHHSGNLPSTREEKNEFKDLVKSKMVSADEENYKEALLAAFKVFAPTGISQEIQDINHDSCAEVGSNSSDFWVMVAALKEFISNEGGGEVPLEGSMPDMISSTEHYINLQKIYHSKAEADFLSMEQRVKSILVKVGQDPSSISKPTIKSFCKNARKLKVCRYRTIEDEFKSPSTTELHKYLADENYSGAIGFYILLRAVDRFAGTYKKFPGQFDGSTDEDASQLKTIALSLLSEMGCDGYELQEELYNEMCRFGAAEIHVVAALIGGITSQEVIKLITKQFVPKRGTFIFNGIDHKSQSLTL</sequence>
<gene>
    <name evidence="4" type="primary">AXL1</name>
    <name evidence="4" type="synonym">AXL</name>
    <name evidence="7" type="ordered locus">At2g32410</name>
</gene>
<proteinExistence type="evidence at protein level"/>